<accession>P26360</accession>
<dbReference type="EMBL" id="D14699">
    <property type="protein sequence ID" value="BAA03526.1"/>
    <property type="molecule type" value="mRNA"/>
</dbReference>
<dbReference type="PIR" id="A47493">
    <property type="entry name" value="A47493"/>
</dbReference>
<dbReference type="SMR" id="P26360"/>
<dbReference type="GO" id="GO:0005743">
    <property type="term" value="C:mitochondrial inner membrane"/>
    <property type="evidence" value="ECO:0007669"/>
    <property type="project" value="UniProtKB-SubCell"/>
</dbReference>
<dbReference type="GO" id="GO:0045259">
    <property type="term" value="C:proton-transporting ATP synthase complex"/>
    <property type="evidence" value="ECO:0007669"/>
    <property type="project" value="UniProtKB-KW"/>
</dbReference>
<dbReference type="GO" id="GO:0046933">
    <property type="term" value="F:proton-transporting ATP synthase activity, rotational mechanism"/>
    <property type="evidence" value="ECO:0007669"/>
    <property type="project" value="InterPro"/>
</dbReference>
<dbReference type="CDD" id="cd12151">
    <property type="entry name" value="F1-ATPase_gamma"/>
    <property type="match status" value="1"/>
</dbReference>
<dbReference type="FunFam" id="1.10.287.80:FF:000001">
    <property type="entry name" value="ATP synthase gamma chain"/>
    <property type="match status" value="1"/>
</dbReference>
<dbReference type="FunFam" id="3.40.1380.10:FF:000005">
    <property type="entry name" value="ATP synthase subunit gamma"/>
    <property type="match status" value="1"/>
</dbReference>
<dbReference type="Gene3D" id="3.40.1380.10">
    <property type="match status" value="1"/>
</dbReference>
<dbReference type="Gene3D" id="1.10.287.80">
    <property type="entry name" value="ATP synthase, gamma subunit, helix hairpin domain"/>
    <property type="match status" value="1"/>
</dbReference>
<dbReference type="HAMAP" id="MF_00815">
    <property type="entry name" value="ATP_synth_gamma_bact"/>
    <property type="match status" value="1"/>
</dbReference>
<dbReference type="InterPro" id="IPR035968">
    <property type="entry name" value="ATP_synth_F1_ATPase_gsu"/>
</dbReference>
<dbReference type="InterPro" id="IPR000131">
    <property type="entry name" value="ATP_synth_F1_gsu"/>
</dbReference>
<dbReference type="InterPro" id="IPR023632">
    <property type="entry name" value="ATP_synth_F1_gsu_CS"/>
</dbReference>
<dbReference type="NCBIfam" id="TIGR01146">
    <property type="entry name" value="ATPsyn_F1gamma"/>
    <property type="match status" value="1"/>
</dbReference>
<dbReference type="PANTHER" id="PTHR11693">
    <property type="entry name" value="ATP SYNTHASE GAMMA CHAIN"/>
    <property type="match status" value="1"/>
</dbReference>
<dbReference type="PANTHER" id="PTHR11693:SF22">
    <property type="entry name" value="ATP SYNTHASE SUBUNIT GAMMA, MITOCHONDRIAL"/>
    <property type="match status" value="1"/>
</dbReference>
<dbReference type="Pfam" id="PF00231">
    <property type="entry name" value="ATP-synt"/>
    <property type="match status" value="1"/>
</dbReference>
<dbReference type="PIRSF" id="PIRSF039089">
    <property type="entry name" value="ATP_synthase_gamma"/>
    <property type="match status" value="1"/>
</dbReference>
<dbReference type="PRINTS" id="PR00126">
    <property type="entry name" value="ATPASEGAMMA"/>
</dbReference>
<dbReference type="SUPFAM" id="SSF52943">
    <property type="entry name" value="ATP synthase (F1-ATPase), gamma subunit"/>
    <property type="match status" value="1"/>
</dbReference>
<dbReference type="PROSITE" id="PS00153">
    <property type="entry name" value="ATPASE_GAMMA"/>
    <property type="match status" value="1"/>
</dbReference>
<proteinExistence type="evidence at protein level"/>
<organism>
    <name type="scientific">Ipomoea batatas</name>
    <name type="common">Sweet potato</name>
    <name type="synonym">Convolvulus batatas</name>
    <dbReference type="NCBI Taxonomy" id="4120"/>
    <lineage>
        <taxon>Eukaryota</taxon>
        <taxon>Viridiplantae</taxon>
        <taxon>Streptophyta</taxon>
        <taxon>Embryophyta</taxon>
        <taxon>Tracheophyta</taxon>
        <taxon>Spermatophyta</taxon>
        <taxon>Magnoliopsida</taxon>
        <taxon>eudicotyledons</taxon>
        <taxon>Gunneridae</taxon>
        <taxon>Pentapetalae</taxon>
        <taxon>asterids</taxon>
        <taxon>lamiids</taxon>
        <taxon>Solanales</taxon>
        <taxon>Convolvulaceae</taxon>
        <taxon>Ipomoeeae</taxon>
        <taxon>Ipomoea</taxon>
    </lineage>
</organism>
<name>ATPG3_IPOBA</name>
<protein>
    <recommendedName>
        <fullName>ATP synthase subunit gamma, mitochondrial</fullName>
    </recommendedName>
    <alternativeName>
        <fullName>F-ATPase gamma subunit</fullName>
    </alternativeName>
</protein>
<reference key="1">
    <citation type="journal article" date="1993" name="J. Biol. Chem.">
        <title>Molecular cloning and characterization of cDNAs for the gamma- and epsilon-subunits of mitochondrial F1F0 ATP synthase from the sweet potato.</title>
        <authorList>
            <person name="Morikami A."/>
            <person name="Ehara G."/>
            <person name="Yuuki K."/>
            <person name="Nakamura K."/>
        </authorList>
    </citation>
    <scope>NUCLEOTIDE SEQUENCE [MRNA]</scope>
    <source>
        <strain>cv. Kokei No. 14</strain>
        <tissue>Tuberous root</tissue>
    </source>
</reference>
<reference key="2">
    <citation type="journal article" date="1989" name="J. Biol. Chem.">
        <title>Correspondence of minor subunits of plant mitochondrial F1ATPase to F1F0ATPase subunits of other organisms.</title>
        <authorList>
            <person name="Kimura T."/>
            <person name="Nakamura K."/>
            <person name="Kajiura H."/>
            <person name="Hattori H."/>
            <person name="Nelson N."/>
            <person name="Asahi T."/>
        </authorList>
    </citation>
    <scope>PROTEIN SEQUENCE OF 46-80</scope>
    <source>
        <strain>cv. Kokei No. 14</strain>
        <tissue>Tuberous root</tissue>
    </source>
</reference>
<gene>
    <name type="primary">ATPC</name>
</gene>
<keyword id="KW-0066">ATP synthesis</keyword>
<keyword id="KW-0139">CF(1)</keyword>
<keyword id="KW-0903">Direct protein sequencing</keyword>
<keyword id="KW-0375">Hydrogen ion transport</keyword>
<keyword id="KW-0406">Ion transport</keyword>
<keyword id="KW-0472">Membrane</keyword>
<keyword id="KW-0496">Mitochondrion</keyword>
<keyword id="KW-0999">Mitochondrion inner membrane</keyword>
<keyword id="KW-0809">Transit peptide</keyword>
<keyword id="KW-0813">Transport</keyword>
<feature type="transit peptide" description="Mitochondrion" evidence="2">
    <location>
        <begin position="1"/>
        <end position="45"/>
    </location>
</feature>
<feature type="chain" id="PRO_0000002683" description="ATP synthase subunit gamma, mitochondrial">
    <location>
        <begin position="46"/>
        <end position="326"/>
    </location>
</feature>
<feature type="sequence conflict" description="In Ref. 2; AA sequence." evidence="3" ref="2">
    <original>TK</original>
    <variation>IS</variation>
    <location>
        <begin position="65"/>
        <end position="66"/>
    </location>
</feature>
<feature type="sequence conflict" description="In Ref. 2; AA sequence." evidence="3" ref="2">
    <original>S</original>
    <variation>A</variation>
    <location>
        <position position="74"/>
    </location>
</feature>
<feature type="sequence conflict" description="In Ref. 2; AA sequence." evidence="3" ref="2">
    <original>Q</original>
    <variation>N</variation>
    <location>
        <position position="80"/>
    </location>
</feature>
<sequence>MAMAALRREGRRLAAAPFTSPTPLNALRSSLVSPSEEIGLSGVRSISTQVVRNRMKSVKNIQKITKAMKMVAASKLRAIQTRAENSRGLWQPFTALLGDTPSVDVKKNVIITISSDKGLCGGINSTSVKTSRNIHKLNSGPEKENKYVILGEKAKAQLVRDSKKDIELIITELQKNPLNYTQVSVVADDILKNVEFDALRIVFNKFQSVVSFVPTMSTVLSPEVVERESESGGKLGDLDSYEIEGAESKSEVLQNLTEFQFSSVLFNAVLENACSEQGARMSAMDSSSRNAGEMLDRLTLTYNRTRQASITTELIEIISGASALEG</sequence>
<evidence type="ECO:0000250" key="1"/>
<evidence type="ECO:0000269" key="2">
    <source>
    </source>
</evidence>
<evidence type="ECO:0000305" key="3"/>
<comment type="function">
    <text>Mitochondrial membrane ATP synthase (F(1)F(0) ATP synthase or Complex V) produces ATP from ADP in the presence of a proton gradient across the membrane which is generated by electron transport complexes of the respiratory chain. F-type ATPases consist of two structural domains, F(1) - containing the extramembraneous catalytic core, and F(0) - containing the membrane proton channel, linked together by a central stalk and a peripheral stalk. During catalysis, ATP synthesis in the catalytic domain of F(1) is coupled via a rotary mechanism of the central stalk subunits to proton translocation. Part of the complex F(1) domain and the central stalk which is part of the complex rotary element. The gamma subunit protrudes into the catalytic domain formed of alpha(3)beta(3). Rotation of the central stalk against the surrounding alpha(3)beta(3) subunits leads to hydrolysis of ATP in three separate catalytic sites on the beta subunits.</text>
</comment>
<comment type="subunit">
    <text>F-type ATPases have 2 components, CF(1) - the catalytic core - and CF(0) - the membrane proton channel. CF(1) has five subunits: alpha(3), beta(3), gamma(1), delta(1), epsilon(1). CF(0) has three main subunits: a, b and c.</text>
</comment>
<comment type="subcellular location">
    <subcellularLocation>
        <location>Mitochondrion</location>
    </subcellularLocation>
    <subcellularLocation>
        <location evidence="1">Mitochondrion inner membrane</location>
        <topology evidence="1">Peripheral membrane protein</topology>
    </subcellularLocation>
</comment>
<comment type="similarity">
    <text evidence="3">Belongs to the ATPase gamma chain family.</text>
</comment>